<gene>
    <name evidence="1" type="primary">thyX</name>
    <name type="ordered locus">BCG_2770c</name>
</gene>
<evidence type="ECO:0000255" key="1">
    <source>
        <dbReference type="HAMAP-Rule" id="MF_01408"/>
    </source>
</evidence>
<evidence type="ECO:0000255" key="2">
    <source>
        <dbReference type="PROSITE-ProRule" id="PRU00661"/>
    </source>
</evidence>
<sequence length="250" mass="27591">MAETAPLRVQLIAKTDFLAPPDVPWTTDADGGPALVEFAGRACYQSWSKPNPKTATNAGYLRHIIDVGHFSVLEHASVSFYITGISRSCTHELIRHRHFSYSQLSQRYVPEKDSRVVVPPGMEDDADLRHILTEAADAARATYSELLAKLEAKFADQPNAILRRKQARQAARAVLPNATETRIVVTGNYRAWRHFIAMRASEHADVEIRRLAIECLRQLAAVAPAVFADFEVTTLADGTEVATSPLATEA</sequence>
<keyword id="KW-0274">FAD</keyword>
<keyword id="KW-0285">Flavoprotein</keyword>
<keyword id="KW-0489">Methyltransferase</keyword>
<keyword id="KW-0521">NADP</keyword>
<keyword id="KW-0545">Nucleotide biosynthesis</keyword>
<keyword id="KW-0808">Transferase</keyword>
<accession>A1KM95</accession>
<feature type="chain" id="PRO_1000184590" description="Flavin-dependent thymidylate synthase">
    <location>
        <begin position="1"/>
        <end position="250"/>
    </location>
</feature>
<feature type="domain" description="ThyX" evidence="2">
    <location>
        <begin position="7"/>
        <end position="233"/>
    </location>
</feature>
<feature type="short sequence motif" description="ThyX motif" evidence="1">
    <location>
        <begin position="95"/>
        <end position="105"/>
    </location>
</feature>
<feature type="active site" description="Involved in ionization of N3 of dUMP, leading to its activation" evidence="1">
    <location>
        <position position="199"/>
    </location>
</feature>
<feature type="binding site" evidence="1">
    <location>
        <position position="71"/>
    </location>
    <ligand>
        <name>FAD</name>
        <dbReference type="ChEBI" id="CHEBI:57692"/>
        <note>ligand shared between neighboring subunits</note>
    </ligand>
</feature>
<feature type="binding site" evidence="1">
    <location>
        <begin position="92"/>
        <end position="95"/>
    </location>
    <ligand>
        <name>dUMP</name>
        <dbReference type="ChEBI" id="CHEBI:246422"/>
        <note>ligand shared between dimeric partners</note>
    </ligand>
</feature>
<feature type="binding site" evidence="1">
    <location>
        <begin position="95"/>
        <end position="97"/>
    </location>
    <ligand>
        <name>FAD</name>
        <dbReference type="ChEBI" id="CHEBI:57692"/>
        <note>ligand shared between neighboring subunits</note>
    </ligand>
</feature>
<feature type="binding site" description="in other chain" evidence="1">
    <location>
        <begin position="103"/>
        <end position="107"/>
    </location>
    <ligand>
        <name>dUMP</name>
        <dbReference type="ChEBI" id="CHEBI:246422"/>
        <note>ligand shared between dimeric partners</note>
    </ligand>
</feature>
<feature type="binding site" evidence="1">
    <location>
        <position position="103"/>
    </location>
    <ligand>
        <name>FAD</name>
        <dbReference type="ChEBI" id="CHEBI:57692"/>
        <note>ligand shared between neighboring subunits</note>
    </ligand>
</feature>
<feature type="binding site" description="in other chain" evidence="1">
    <location>
        <position position="172"/>
    </location>
    <ligand>
        <name>dUMP</name>
        <dbReference type="ChEBI" id="CHEBI:246422"/>
        <note>ligand shared between dimeric partners</note>
    </ligand>
</feature>
<feature type="binding site" evidence="1">
    <location>
        <begin position="188"/>
        <end position="190"/>
    </location>
    <ligand>
        <name>FAD</name>
        <dbReference type="ChEBI" id="CHEBI:57692"/>
        <note>ligand shared between neighboring subunits</note>
    </ligand>
</feature>
<feature type="binding site" evidence="1">
    <location>
        <position position="194"/>
    </location>
    <ligand>
        <name>FAD</name>
        <dbReference type="ChEBI" id="CHEBI:57692"/>
        <note>ligand shared between neighboring subunits</note>
    </ligand>
</feature>
<feature type="binding site" evidence="1">
    <location>
        <position position="199"/>
    </location>
    <ligand>
        <name>dUMP</name>
        <dbReference type="ChEBI" id="CHEBI:246422"/>
        <note>ligand shared between dimeric partners</note>
    </ligand>
</feature>
<proteinExistence type="inferred from homology"/>
<reference key="1">
    <citation type="journal article" date="2007" name="Proc. Natl. Acad. Sci. U.S.A.">
        <title>Genome plasticity of BCG and impact on vaccine efficacy.</title>
        <authorList>
            <person name="Brosch R."/>
            <person name="Gordon S.V."/>
            <person name="Garnier T."/>
            <person name="Eiglmeier K."/>
            <person name="Frigui W."/>
            <person name="Valenti P."/>
            <person name="Dos Santos S."/>
            <person name="Duthoy S."/>
            <person name="Lacroix C."/>
            <person name="Garcia-Pelayo C."/>
            <person name="Inwald J.K."/>
            <person name="Golby P."/>
            <person name="Garcia J.N."/>
            <person name="Hewinson R.G."/>
            <person name="Behr M.A."/>
            <person name="Quail M.A."/>
            <person name="Churcher C."/>
            <person name="Barrell B.G."/>
            <person name="Parkhill J."/>
            <person name="Cole S.T."/>
        </authorList>
    </citation>
    <scope>NUCLEOTIDE SEQUENCE [LARGE SCALE GENOMIC DNA]</scope>
    <source>
        <strain>BCG / Pasteur 1173P2</strain>
    </source>
</reference>
<dbReference type="EC" id="2.1.1.148" evidence="1"/>
<dbReference type="EMBL" id="AM408590">
    <property type="protein sequence ID" value="CAL72758.1"/>
    <property type="molecule type" value="Genomic_DNA"/>
</dbReference>
<dbReference type="RefSeq" id="WP_003899465.1">
    <property type="nucleotide sequence ID" value="NC_008769.1"/>
</dbReference>
<dbReference type="SMR" id="A1KM95"/>
<dbReference type="KEGG" id="mbb:BCG_2770c"/>
<dbReference type="HOGENOM" id="CLU_077585_1_0_11"/>
<dbReference type="UniPathway" id="UPA00575"/>
<dbReference type="Proteomes" id="UP000001472">
    <property type="component" value="Chromosome"/>
</dbReference>
<dbReference type="GO" id="GO:0050660">
    <property type="term" value="F:flavin adenine dinucleotide binding"/>
    <property type="evidence" value="ECO:0007669"/>
    <property type="project" value="InterPro"/>
</dbReference>
<dbReference type="GO" id="GO:0070402">
    <property type="term" value="F:NADPH binding"/>
    <property type="evidence" value="ECO:0007669"/>
    <property type="project" value="TreeGrafter"/>
</dbReference>
<dbReference type="GO" id="GO:0050797">
    <property type="term" value="F:thymidylate synthase (FAD) activity"/>
    <property type="evidence" value="ECO:0007669"/>
    <property type="project" value="UniProtKB-UniRule"/>
</dbReference>
<dbReference type="GO" id="GO:0004799">
    <property type="term" value="F:thymidylate synthase activity"/>
    <property type="evidence" value="ECO:0007669"/>
    <property type="project" value="TreeGrafter"/>
</dbReference>
<dbReference type="GO" id="GO:0006231">
    <property type="term" value="P:dTMP biosynthetic process"/>
    <property type="evidence" value="ECO:0007669"/>
    <property type="project" value="UniProtKB-UniRule"/>
</dbReference>
<dbReference type="GO" id="GO:0006235">
    <property type="term" value="P:dTTP biosynthetic process"/>
    <property type="evidence" value="ECO:0007669"/>
    <property type="project" value="UniProtKB-UniRule"/>
</dbReference>
<dbReference type="GO" id="GO:0032259">
    <property type="term" value="P:methylation"/>
    <property type="evidence" value="ECO:0007669"/>
    <property type="project" value="UniProtKB-KW"/>
</dbReference>
<dbReference type="CDD" id="cd20175">
    <property type="entry name" value="ThyX"/>
    <property type="match status" value="1"/>
</dbReference>
<dbReference type="Gene3D" id="3.30.1360.170">
    <property type="match status" value="1"/>
</dbReference>
<dbReference type="HAMAP" id="MF_01408">
    <property type="entry name" value="ThyX"/>
    <property type="match status" value="1"/>
</dbReference>
<dbReference type="InterPro" id="IPR003669">
    <property type="entry name" value="Thymidylate_synthase_ThyX"/>
</dbReference>
<dbReference type="InterPro" id="IPR036098">
    <property type="entry name" value="Thymidylate_synthase_ThyX_sf"/>
</dbReference>
<dbReference type="NCBIfam" id="TIGR02170">
    <property type="entry name" value="thyX"/>
    <property type="match status" value="1"/>
</dbReference>
<dbReference type="PANTHER" id="PTHR34934">
    <property type="entry name" value="FLAVIN-DEPENDENT THYMIDYLATE SYNTHASE"/>
    <property type="match status" value="1"/>
</dbReference>
<dbReference type="PANTHER" id="PTHR34934:SF1">
    <property type="entry name" value="FLAVIN-DEPENDENT THYMIDYLATE SYNTHASE"/>
    <property type="match status" value="1"/>
</dbReference>
<dbReference type="Pfam" id="PF02511">
    <property type="entry name" value="Thy1"/>
    <property type="match status" value="1"/>
</dbReference>
<dbReference type="SUPFAM" id="SSF69796">
    <property type="entry name" value="Thymidylate synthase-complementing protein Thy1"/>
    <property type="match status" value="1"/>
</dbReference>
<dbReference type="PROSITE" id="PS51331">
    <property type="entry name" value="THYX"/>
    <property type="match status" value="1"/>
</dbReference>
<name>THYX_MYCBP</name>
<comment type="function">
    <text evidence="1">Catalyzes the reductive methylation of 2'-deoxyuridine-5'-monophosphate (dUMP) to 2'-deoxythymidine-5'-monophosphate (dTMP) while utilizing 5,10-methylenetetrahydrofolate (mTHF) as the methyl donor, and NADPH and FADH(2) as the reductant.</text>
</comment>
<comment type="catalytic activity">
    <reaction evidence="1">
        <text>dUMP + (6R)-5,10-methylene-5,6,7,8-tetrahydrofolate + NADPH + H(+) = dTMP + (6S)-5,6,7,8-tetrahydrofolate + NADP(+)</text>
        <dbReference type="Rhea" id="RHEA:29043"/>
        <dbReference type="ChEBI" id="CHEBI:15378"/>
        <dbReference type="ChEBI" id="CHEBI:15636"/>
        <dbReference type="ChEBI" id="CHEBI:57453"/>
        <dbReference type="ChEBI" id="CHEBI:57783"/>
        <dbReference type="ChEBI" id="CHEBI:58349"/>
        <dbReference type="ChEBI" id="CHEBI:63528"/>
        <dbReference type="ChEBI" id="CHEBI:246422"/>
        <dbReference type="EC" id="2.1.1.148"/>
    </reaction>
</comment>
<comment type="cofactor">
    <cofactor evidence="1">
        <name>FAD</name>
        <dbReference type="ChEBI" id="CHEBI:57692"/>
    </cofactor>
    <text evidence="1">Binds 4 FAD per tetramer. Each FAD binding site is formed by three monomers.</text>
</comment>
<comment type="pathway">
    <text evidence="1">Pyrimidine metabolism; dTTP biosynthesis.</text>
</comment>
<comment type="subunit">
    <text evidence="1">Homotetramer.</text>
</comment>
<comment type="similarity">
    <text evidence="1">Belongs to the thymidylate synthase ThyX family.</text>
</comment>
<organism>
    <name type="scientific">Mycobacterium bovis (strain BCG / Pasteur 1173P2)</name>
    <dbReference type="NCBI Taxonomy" id="410289"/>
    <lineage>
        <taxon>Bacteria</taxon>
        <taxon>Bacillati</taxon>
        <taxon>Actinomycetota</taxon>
        <taxon>Actinomycetes</taxon>
        <taxon>Mycobacteriales</taxon>
        <taxon>Mycobacteriaceae</taxon>
        <taxon>Mycobacterium</taxon>
        <taxon>Mycobacterium tuberculosis complex</taxon>
    </lineage>
</organism>
<protein>
    <recommendedName>
        <fullName evidence="1">Flavin-dependent thymidylate synthase</fullName>
        <shortName evidence="1">FDTS</shortName>
        <ecNumber evidence="1">2.1.1.148</ecNumber>
    </recommendedName>
    <alternativeName>
        <fullName evidence="1">FAD-dependent thymidylate synthase</fullName>
    </alternativeName>
    <alternativeName>
        <fullName evidence="1">Thymidylate synthase ThyX</fullName>
        <shortName evidence="1">TS</shortName>
        <shortName evidence="1">TSase</shortName>
    </alternativeName>
</protein>